<protein>
    <recommendedName>
        <fullName evidence="1">UPF0250 protein COSY_0496</fullName>
    </recommendedName>
</protein>
<keyword id="KW-1185">Reference proteome</keyword>
<proteinExistence type="inferred from homology"/>
<name>Y496_VESOH</name>
<accession>A5CWR4</accession>
<dbReference type="EMBL" id="AP009247">
    <property type="protein sequence ID" value="BAF61615.1"/>
    <property type="molecule type" value="Genomic_DNA"/>
</dbReference>
<dbReference type="RefSeq" id="WP_011929885.1">
    <property type="nucleotide sequence ID" value="NC_009465.1"/>
</dbReference>
<dbReference type="SMR" id="A5CWR4"/>
<dbReference type="STRING" id="412965.COSY_0496"/>
<dbReference type="KEGG" id="vok:COSY_0496"/>
<dbReference type="eggNOG" id="COG2921">
    <property type="taxonomic scope" value="Bacteria"/>
</dbReference>
<dbReference type="HOGENOM" id="CLU_161438_1_2_6"/>
<dbReference type="OrthoDB" id="9793424at2"/>
<dbReference type="Proteomes" id="UP000000247">
    <property type="component" value="Chromosome"/>
</dbReference>
<dbReference type="GO" id="GO:0005829">
    <property type="term" value="C:cytosol"/>
    <property type="evidence" value="ECO:0007669"/>
    <property type="project" value="TreeGrafter"/>
</dbReference>
<dbReference type="Gene3D" id="3.30.70.260">
    <property type="match status" value="1"/>
</dbReference>
<dbReference type="HAMAP" id="MF_00659">
    <property type="entry name" value="UPF0250"/>
    <property type="match status" value="1"/>
</dbReference>
<dbReference type="InterPro" id="IPR007454">
    <property type="entry name" value="UPF0250_YbeD-like"/>
</dbReference>
<dbReference type="InterPro" id="IPR027471">
    <property type="entry name" value="YbeD-like_sf"/>
</dbReference>
<dbReference type="PANTHER" id="PTHR38036">
    <property type="entry name" value="UPF0250 PROTEIN YBED"/>
    <property type="match status" value="1"/>
</dbReference>
<dbReference type="PANTHER" id="PTHR38036:SF1">
    <property type="entry name" value="UPF0250 PROTEIN YBED"/>
    <property type="match status" value="1"/>
</dbReference>
<dbReference type="Pfam" id="PF04359">
    <property type="entry name" value="DUF493"/>
    <property type="match status" value="1"/>
</dbReference>
<dbReference type="SUPFAM" id="SSF117991">
    <property type="entry name" value="YbeD/HP0495-like"/>
    <property type="match status" value="1"/>
</dbReference>
<evidence type="ECO:0000255" key="1">
    <source>
        <dbReference type="HAMAP-Rule" id="MF_00659"/>
    </source>
</evidence>
<organism>
    <name type="scientific">Vesicomyosocius okutanii subsp. Calyptogena okutanii (strain HA)</name>
    <dbReference type="NCBI Taxonomy" id="412965"/>
    <lineage>
        <taxon>Bacteria</taxon>
        <taxon>Pseudomonadati</taxon>
        <taxon>Pseudomonadota</taxon>
        <taxon>Gammaproteobacteria</taxon>
        <taxon>Candidatus Pseudothioglobaceae</taxon>
        <taxon>Candidatus Vesicomyosocius</taxon>
    </lineage>
</organism>
<reference key="1">
    <citation type="journal article" date="2007" name="Curr. Biol.">
        <title>Reduced genome of the thioautotrophic intracellular symbiont in a deep-sea clam, Calyptogena okutanii.</title>
        <authorList>
            <person name="Kuwahara H."/>
            <person name="Yoshida T."/>
            <person name="Takaki Y."/>
            <person name="Shimamura S."/>
            <person name="Nishi S."/>
            <person name="Harada M."/>
            <person name="Matsuyama K."/>
            <person name="Takishita K."/>
            <person name="Kawato M."/>
            <person name="Uematsu K."/>
            <person name="Fujiwara Y."/>
            <person name="Sato T."/>
            <person name="Kato C."/>
            <person name="Kitagawa M."/>
            <person name="Kato I."/>
            <person name="Maruyama T."/>
        </authorList>
    </citation>
    <scope>NUCLEOTIDE SEQUENCE [LARGE SCALE GENOMIC DNA]</scope>
    <source>
        <strain>HA</strain>
    </source>
</reference>
<feature type="chain" id="PRO_1000061904" description="UPF0250 protein COSY_0496">
    <location>
        <begin position="1"/>
        <end position="92"/>
    </location>
</feature>
<comment type="similarity">
    <text evidence="1">Belongs to the UPF0250 family.</text>
</comment>
<sequence length="92" mass="10570">MITVNSTSETLFNFPCDYSIKIFGKNCEKFQNTICTIVERHTHKLNPNKITKKHSSKGNYVSFSIRIIANSRIQLDSINQDLKNCNLVSYVL</sequence>
<gene>
    <name type="ordered locus">COSY_0496</name>
</gene>